<keyword id="KW-0488">Methylation</keyword>
<keyword id="KW-1185">Reference proteome</keyword>
<keyword id="KW-0687">Ribonucleoprotein</keyword>
<keyword id="KW-0689">Ribosomal protein</keyword>
<keyword id="KW-0694">RNA-binding</keyword>
<keyword id="KW-0699">rRNA-binding</keyword>
<keyword id="KW-0820">tRNA-binding</keyword>
<organism>
    <name type="scientific">Syntrophus aciditrophicus (strain SB)</name>
    <dbReference type="NCBI Taxonomy" id="56780"/>
    <lineage>
        <taxon>Bacteria</taxon>
        <taxon>Pseudomonadati</taxon>
        <taxon>Thermodesulfobacteriota</taxon>
        <taxon>Syntrophia</taxon>
        <taxon>Syntrophales</taxon>
        <taxon>Syntrophaceae</taxon>
        <taxon>Syntrophus</taxon>
    </lineage>
</organism>
<comment type="function">
    <text evidence="2">With S4 and S5 plays an important role in translational accuracy.</text>
</comment>
<comment type="function">
    <text evidence="2">Interacts with and stabilizes bases of the 16S rRNA that are involved in tRNA selection in the A site and with the mRNA backbone. Located at the interface of the 30S and 50S subunits, it traverses the body of the 30S subunit contacting proteins on the other side and probably holding the rRNA structure together. The combined cluster of proteins S8, S12 and S17 appears to hold together the shoulder and platform of the 30S subunit.</text>
</comment>
<comment type="subunit">
    <text evidence="2">Part of the 30S ribosomal subunit. Contacts proteins S8 and S17. May interact with IF1 in the 30S initiation complex.</text>
</comment>
<comment type="similarity">
    <text evidence="2">Belongs to the universal ribosomal protein uS12 family.</text>
</comment>
<comment type="sequence caution" evidence="3">
    <conflict type="frameshift">
        <sequence resource="EMBL-CDS" id="ABC76174"/>
    </conflict>
</comment>
<sequence length="123" mass="13512">MPTINQLVRNGRLRAAKKASTPALAGSPQRRGVCVRVYTSTPKKPNSALRKVARVRLTSRYEVTSYIPGIGHNLQEHSVVLVRGGRVKDLPGVRYHIVRGTLDAVGVQDRKQGRSKYGAKKPS</sequence>
<feature type="chain" id="PRO_0000296041" description="Small ribosomal subunit protein uS12">
    <location>
        <begin position="1"/>
        <end position="123"/>
    </location>
</feature>
<feature type="modified residue" description="3-methylthioaspartic acid" evidence="1">
    <location>
        <position position="89"/>
    </location>
</feature>
<evidence type="ECO:0000250" key="1"/>
<evidence type="ECO:0000255" key="2">
    <source>
        <dbReference type="HAMAP-Rule" id="MF_00403"/>
    </source>
</evidence>
<evidence type="ECO:0000305" key="3"/>
<accession>Q2LQ85</accession>
<protein>
    <recommendedName>
        <fullName evidence="2">Small ribosomal subunit protein uS12</fullName>
    </recommendedName>
    <alternativeName>
        <fullName evidence="3">30S ribosomal protein S12</fullName>
    </alternativeName>
</protein>
<proteinExistence type="inferred from homology"/>
<dbReference type="EMBL" id="CP000252">
    <property type="protein sequence ID" value="ABC76174.1"/>
    <property type="status" value="ALT_FRAME"/>
    <property type="molecule type" value="Genomic_DNA"/>
</dbReference>
<dbReference type="SMR" id="Q2LQ85"/>
<dbReference type="FunCoup" id="Q2LQ85">
    <property type="interactions" value="472"/>
</dbReference>
<dbReference type="STRING" id="56780.SYN_03254"/>
<dbReference type="KEGG" id="sat:SYN_03254"/>
<dbReference type="eggNOG" id="COG0048">
    <property type="taxonomic scope" value="Bacteria"/>
</dbReference>
<dbReference type="HOGENOM" id="CLU_104295_5_1_7"/>
<dbReference type="InParanoid" id="Q2LQ85"/>
<dbReference type="Proteomes" id="UP000001933">
    <property type="component" value="Chromosome"/>
</dbReference>
<dbReference type="GO" id="GO:0015935">
    <property type="term" value="C:small ribosomal subunit"/>
    <property type="evidence" value="ECO:0007669"/>
    <property type="project" value="InterPro"/>
</dbReference>
<dbReference type="GO" id="GO:0019843">
    <property type="term" value="F:rRNA binding"/>
    <property type="evidence" value="ECO:0007669"/>
    <property type="project" value="UniProtKB-UniRule"/>
</dbReference>
<dbReference type="GO" id="GO:0003735">
    <property type="term" value="F:structural constituent of ribosome"/>
    <property type="evidence" value="ECO:0007669"/>
    <property type="project" value="InterPro"/>
</dbReference>
<dbReference type="GO" id="GO:0000049">
    <property type="term" value="F:tRNA binding"/>
    <property type="evidence" value="ECO:0007669"/>
    <property type="project" value="UniProtKB-UniRule"/>
</dbReference>
<dbReference type="GO" id="GO:0006412">
    <property type="term" value="P:translation"/>
    <property type="evidence" value="ECO:0007669"/>
    <property type="project" value="UniProtKB-UniRule"/>
</dbReference>
<dbReference type="CDD" id="cd03368">
    <property type="entry name" value="Ribosomal_S12"/>
    <property type="match status" value="1"/>
</dbReference>
<dbReference type="FunFam" id="2.40.50.140:FF:000001">
    <property type="entry name" value="30S ribosomal protein S12"/>
    <property type="match status" value="1"/>
</dbReference>
<dbReference type="Gene3D" id="2.40.50.140">
    <property type="entry name" value="Nucleic acid-binding proteins"/>
    <property type="match status" value="1"/>
</dbReference>
<dbReference type="HAMAP" id="MF_00403_B">
    <property type="entry name" value="Ribosomal_uS12_B"/>
    <property type="match status" value="1"/>
</dbReference>
<dbReference type="InterPro" id="IPR012340">
    <property type="entry name" value="NA-bd_OB-fold"/>
</dbReference>
<dbReference type="InterPro" id="IPR006032">
    <property type="entry name" value="Ribosomal_uS12"/>
</dbReference>
<dbReference type="InterPro" id="IPR005679">
    <property type="entry name" value="Ribosomal_uS12_bac"/>
</dbReference>
<dbReference type="NCBIfam" id="TIGR00981">
    <property type="entry name" value="rpsL_bact"/>
    <property type="match status" value="1"/>
</dbReference>
<dbReference type="PANTHER" id="PTHR11652">
    <property type="entry name" value="30S RIBOSOMAL PROTEIN S12 FAMILY MEMBER"/>
    <property type="match status" value="1"/>
</dbReference>
<dbReference type="Pfam" id="PF00164">
    <property type="entry name" value="Ribosom_S12_S23"/>
    <property type="match status" value="1"/>
</dbReference>
<dbReference type="PIRSF" id="PIRSF002133">
    <property type="entry name" value="Ribosomal_S12/S23"/>
    <property type="match status" value="1"/>
</dbReference>
<dbReference type="PRINTS" id="PR01034">
    <property type="entry name" value="RIBOSOMALS12"/>
</dbReference>
<dbReference type="SUPFAM" id="SSF50249">
    <property type="entry name" value="Nucleic acid-binding proteins"/>
    <property type="match status" value="1"/>
</dbReference>
<dbReference type="PROSITE" id="PS00055">
    <property type="entry name" value="RIBOSOMAL_S12"/>
    <property type="match status" value="1"/>
</dbReference>
<gene>
    <name evidence="2" type="primary">rpsL</name>
    <name type="ordered locus">SYNAS_02950</name>
    <name type="ORF">SYN_03254</name>
</gene>
<reference key="1">
    <citation type="journal article" date="2007" name="Proc. Natl. Acad. Sci. U.S.A.">
        <title>The genome of Syntrophus aciditrophicus: life at the thermodynamic limit of microbial growth.</title>
        <authorList>
            <person name="McInerney M.J."/>
            <person name="Rohlin L."/>
            <person name="Mouttaki H."/>
            <person name="Kim U."/>
            <person name="Krupp R.S."/>
            <person name="Rios-Hernandez L."/>
            <person name="Sieber J."/>
            <person name="Struchtemeyer C.G."/>
            <person name="Bhattacharyya A."/>
            <person name="Campbell J.W."/>
            <person name="Gunsalus R.P."/>
        </authorList>
    </citation>
    <scope>NUCLEOTIDE SEQUENCE [LARGE SCALE GENOMIC DNA]</scope>
    <source>
        <strain>SB</strain>
    </source>
</reference>
<name>RS12_SYNAS</name>